<protein>
    <recommendedName>
        <fullName evidence="1">DNA ligase</fullName>
        <ecNumber evidence="1">6.5.1.2</ecNumber>
    </recommendedName>
    <alternativeName>
        <fullName evidence="1">Polydeoxyribonucleotide synthase [NAD(+)]</fullName>
    </alternativeName>
</protein>
<comment type="function">
    <text evidence="1">DNA ligase that catalyzes the formation of phosphodiester linkages between 5'-phosphoryl and 3'-hydroxyl groups in double-stranded DNA using NAD as a coenzyme and as the energy source for the reaction. It is essential for DNA replication and repair of damaged DNA.</text>
</comment>
<comment type="catalytic activity">
    <reaction evidence="1">
        <text>NAD(+) + (deoxyribonucleotide)n-3'-hydroxyl + 5'-phospho-(deoxyribonucleotide)m = (deoxyribonucleotide)n+m + AMP + beta-nicotinamide D-nucleotide.</text>
        <dbReference type="EC" id="6.5.1.2"/>
    </reaction>
</comment>
<comment type="cofactor">
    <cofactor evidence="1">
        <name>Mg(2+)</name>
        <dbReference type="ChEBI" id="CHEBI:18420"/>
    </cofactor>
    <cofactor evidence="1">
        <name>Mn(2+)</name>
        <dbReference type="ChEBI" id="CHEBI:29035"/>
    </cofactor>
</comment>
<comment type="similarity">
    <text evidence="1">Belongs to the NAD-dependent DNA ligase family. LigA subfamily.</text>
</comment>
<accession>B3QFL8</accession>
<organism>
    <name type="scientific">Rhodopseudomonas palustris (strain TIE-1)</name>
    <dbReference type="NCBI Taxonomy" id="395960"/>
    <lineage>
        <taxon>Bacteria</taxon>
        <taxon>Pseudomonadati</taxon>
        <taxon>Pseudomonadota</taxon>
        <taxon>Alphaproteobacteria</taxon>
        <taxon>Hyphomicrobiales</taxon>
        <taxon>Nitrobacteraceae</taxon>
        <taxon>Rhodopseudomonas</taxon>
    </lineage>
</organism>
<name>DNLJ_RHOPT</name>
<keyword id="KW-0227">DNA damage</keyword>
<keyword id="KW-0234">DNA repair</keyword>
<keyword id="KW-0235">DNA replication</keyword>
<keyword id="KW-0436">Ligase</keyword>
<keyword id="KW-0460">Magnesium</keyword>
<keyword id="KW-0464">Manganese</keyword>
<keyword id="KW-0479">Metal-binding</keyword>
<keyword id="KW-0520">NAD</keyword>
<keyword id="KW-0862">Zinc</keyword>
<feature type="chain" id="PRO_0000380457" description="DNA ligase">
    <location>
        <begin position="1"/>
        <end position="715"/>
    </location>
</feature>
<feature type="domain" description="BRCT" evidence="1">
    <location>
        <begin position="637"/>
        <end position="715"/>
    </location>
</feature>
<feature type="active site" description="N6-AMP-lysine intermediate" evidence="1">
    <location>
        <position position="130"/>
    </location>
</feature>
<feature type="binding site" evidence="1">
    <location>
        <begin position="47"/>
        <end position="51"/>
    </location>
    <ligand>
        <name>NAD(+)</name>
        <dbReference type="ChEBI" id="CHEBI:57540"/>
    </ligand>
</feature>
<feature type="binding site" evidence="1">
    <location>
        <begin position="96"/>
        <end position="97"/>
    </location>
    <ligand>
        <name>NAD(+)</name>
        <dbReference type="ChEBI" id="CHEBI:57540"/>
    </ligand>
</feature>
<feature type="binding site" evidence="1">
    <location>
        <position position="128"/>
    </location>
    <ligand>
        <name>NAD(+)</name>
        <dbReference type="ChEBI" id="CHEBI:57540"/>
    </ligand>
</feature>
<feature type="binding site" evidence="1">
    <location>
        <position position="151"/>
    </location>
    <ligand>
        <name>NAD(+)</name>
        <dbReference type="ChEBI" id="CHEBI:57540"/>
    </ligand>
</feature>
<feature type="binding site" evidence="1">
    <location>
        <position position="188"/>
    </location>
    <ligand>
        <name>NAD(+)</name>
        <dbReference type="ChEBI" id="CHEBI:57540"/>
    </ligand>
</feature>
<feature type="binding site" evidence="1">
    <location>
        <position position="306"/>
    </location>
    <ligand>
        <name>NAD(+)</name>
        <dbReference type="ChEBI" id="CHEBI:57540"/>
    </ligand>
</feature>
<feature type="binding site" evidence="1">
    <location>
        <position position="330"/>
    </location>
    <ligand>
        <name>NAD(+)</name>
        <dbReference type="ChEBI" id="CHEBI:57540"/>
    </ligand>
</feature>
<feature type="binding site" evidence="1">
    <location>
        <position position="435"/>
    </location>
    <ligand>
        <name>Zn(2+)</name>
        <dbReference type="ChEBI" id="CHEBI:29105"/>
    </ligand>
</feature>
<feature type="binding site" evidence="1">
    <location>
        <position position="438"/>
    </location>
    <ligand>
        <name>Zn(2+)</name>
        <dbReference type="ChEBI" id="CHEBI:29105"/>
    </ligand>
</feature>
<feature type="binding site" evidence="1">
    <location>
        <position position="453"/>
    </location>
    <ligand>
        <name>Zn(2+)</name>
        <dbReference type="ChEBI" id="CHEBI:29105"/>
    </ligand>
</feature>
<feature type="binding site" evidence="1">
    <location>
        <position position="459"/>
    </location>
    <ligand>
        <name>Zn(2+)</name>
        <dbReference type="ChEBI" id="CHEBI:29105"/>
    </ligand>
</feature>
<gene>
    <name evidence="1" type="primary">ligA</name>
    <name type="ordered locus">Rpal_4035</name>
</gene>
<evidence type="ECO:0000255" key="1">
    <source>
        <dbReference type="HAMAP-Rule" id="MF_01588"/>
    </source>
</evidence>
<dbReference type="EC" id="6.5.1.2" evidence="1"/>
<dbReference type="EMBL" id="CP001096">
    <property type="protein sequence ID" value="ACF02531.1"/>
    <property type="molecule type" value="Genomic_DNA"/>
</dbReference>
<dbReference type="RefSeq" id="WP_012496953.1">
    <property type="nucleotide sequence ID" value="NC_011004.1"/>
</dbReference>
<dbReference type="SMR" id="B3QFL8"/>
<dbReference type="KEGG" id="rpt:Rpal_4035"/>
<dbReference type="HOGENOM" id="CLU_007764_2_0_5"/>
<dbReference type="OrthoDB" id="9759736at2"/>
<dbReference type="Proteomes" id="UP000001725">
    <property type="component" value="Chromosome"/>
</dbReference>
<dbReference type="GO" id="GO:0005829">
    <property type="term" value="C:cytosol"/>
    <property type="evidence" value="ECO:0007669"/>
    <property type="project" value="TreeGrafter"/>
</dbReference>
<dbReference type="GO" id="GO:0003911">
    <property type="term" value="F:DNA ligase (NAD+) activity"/>
    <property type="evidence" value="ECO:0007669"/>
    <property type="project" value="UniProtKB-UniRule"/>
</dbReference>
<dbReference type="GO" id="GO:0046872">
    <property type="term" value="F:metal ion binding"/>
    <property type="evidence" value="ECO:0007669"/>
    <property type="project" value="UniProtKB-KW"/>
</dbReference>
<dbReference type="GO" id="GO:0006281">
    <property type="term" value="P:DNA repair"/>
    <property type="evidence" value="ECO:0007669"/>
    <property type="project" value="UniProtKB-KW"/>
</dbReference>
<dbReference type="GO" id="GO:0006260">
    <property type="term" value="P:DNA replication"/>
    <property type="evidence" value="ECO:0007669"/>
    <property type="project" value="UniProtKB-KW"/>
</dbReference>
<dbReference type="CDD" id="cd17748">
    <property type="entry name" value="BRCT_DNA_ligase_like"/>
    <property type="match status" value="1"/>
</dbReference>
<dbReference type="CDD" id="cd00114">
    <property type="entry name" value="LIGANc"/>
    <property type="match status" value="1"/>
</dbReference>
<dbReference type="FunFam" id="1.10.150.20:FF:000007">
    <property type="entry name" value="DNA ligase"/>
    <property type="match status" value="1"/>
</dbReference>
<dbReference type="FunFam" id="3.30.470.30:FF:000001">
    <property type="entry name" value="DNA ligase"/>
    <property type="match status" value="1"/>
</dbReference>
<dbReference type="FunFam" id="3.40.50.10190:FF:000054">
    <property type="entry name" value="DNA ligase"/>
    <property type="match status" value="1"/>
</dbReference>
<dbReference type="Gene3D" id="6.20.10.30">
    <property type="match status" value="1"/>
</dbReference>
<dbReference type="Gene3D" id="1.10.150.20">
    <property type="entry name" value="5' to 3' exonuclease, C-terminal subdomain"/>
    <property type="match status" value="2"/>
</dbReference>
<dbReference type="Gene3D" id="3.40.50.10190">
    <property type="entry name" value="BRCT domain"/>
    <property type="match status" value="1"/>
</dbReference>
<dbReference type="Gene3D" id="3.30.470.30">
    <property type="entry name" value="DNA ligase/mRNA capping enzyme"/>
    <property type="match status" value="1"/>
</dbReference>
<dbReference type="Gene3D" id="1.10.287.610">
    <property type="entry name" value="Helix hairpin bin"/>
    <property type="match status" value="1"/>
</dbReference>
<dbReference type="Gene3D" id="2.40.50.140">
    <property type="entry name" value="Nucleic acid-binding proteins"/>
    <property type="match status" value="1"/>
</dbReference>
<dbReference type="HAMAP" id="MF_01588">
    <property type="entry name" value="DNA_ligase_A"/>
    <property type="match status" value="1"/>
</dbReference>
<dbReference type="InterPro" id="IPR001357">
    <property type="entry name" value="BRCT_dom"/>
</dbReference>
<dbReference type="InterPro" id="IPR036420">
    <property type="entry name" value="BRCT_dom_sf"/>
</dbReference>
<dbReference type="InterPro" id="IPR041663">
    <property type="entry name" value="DisA/LigA_HHH"/>
</dbReference>
<dbReference type="InterPro" id="IPR001679">
    <property type="entry name" value="DNA_ligase"/>
</dbReference>
<dbReference type="InterPro" id="IPR018239">
    <property type="entry name" value="DNA_ligase_AS"/>
</dbReference>
<dbReference type="InterPro" id="IPR033136">
    <property type="entry name" value="DNA_ligase_CS"/>
</dbReference>
<dbReference type="InterPro" id="IPR013839">
    <property type="entry name" value="DNAligase_adenylation"/>
</dbReference>
<dbReference type="InterPro" id="IPR013840">
    <property type="entry name" value="DNAligase_N"/>
</dbReference>
<dbReference type="InterPro" id="IPR012340">
    <property type="entry name" value="NA-bd_OB-fold"/>
</dbReference>
<dbReference type="InterPro" id="IPR004150">
    <property type="entry name" value="NAD_DNA_ligase_OB"/>
</dbReference>
<dbReference type="InterPro" id="IPR010994">
    <property type="entry name" value="RuvA_2-like"/>
</dbReference>
<dbReference type="InterPro" id="IPR004149">
    <property type="entry name" value="Znf_DNAligase_C4"/>
</dbReference>
<dbReference type="NCBIfam" id="TIGR00575">
    <property type="entry name" value="dnlj"/>
    <property type="match status" value="1"/>
</dbReference>
<dbReference type="NCBIfam" id="NF005932">
    <property type="entry name" value="PRK07956.1"/>
    <property type="match status" value="1"/>
</dbReference>
<dbReference type="PANTHER" id="PTHR23389">
    <property type="entry name" value="CHROMOSOME TRANSMISSION FIDELITY FACTOR 18"/>
    <property type="match status" value="1"/>
</dbReference>
<dbReference type="PANTHER" id="PTHR23389:SF9">
    <property type="entry name" value="DNA LIGASE"/>
    <property type="match status" value="1"/>
</dbReference>
<dbReference type="Pfam" id="PF00533">
    <property type="entry name" value="BRCT"/>
    <property type="match status" value="1"/>
</dbReference>
<dbReference type="Pfam" id="PF01653">
    <property type="entry name" value="DNA_ligase_aden"/>
    <property type="match status" value="1"/>
</dbReference>
<dbReference type="Pfam" id="PF03120">
    <property type="entry name" value="DNA_ligase_OB"/>
    <property type="match status" value="1"/>
</dbReference>
<dbReference type="Pfam" id="PF03119">
    <property type="entry name" value="DNA_ligase_ZBD"/>
    <property type="match status" value="1"/>
</dbReference>
<dbReference type="Pfam" id="PF12826">
    <property type="entry name" value="HHH_2"/>
    <property type="match status" value="1"/>
</dbReference>
<dbReference type="PIRSF" id="PIRSF001604">
    <property type="entry name" value="LigA"/>
    <property type="match status" value="1"/>
</dbReference>
<dbReference type="SMART" id="SM00292">
    <property type="entry name" value="BRCT"/>
    <property type="match status" value="1"/>
</dbReference>
<dbReference type="SMART" id="SM00532">
    <property type="entry name" value="LIGANc"/>
    <property type="match status" value="1"/>
</dbReference>
<dbReference type="SUPFAM" id="SSF52113">
    <property type="entry name" value="BRCT domain"/>
    <property type="match status" value="1"/>
</dbReference>
<dbReference type="SUPFAM" id="SSF56091">
    <property type="entry name" value="DNA ligase/mRNA capping enzyme, catalytic domain"/>
    <property type="match status" value="1"/>
</dbReference>
<dbReference type="SUPFAM" id="SSF50249">
    <property type="entry name" value="Nucleic acid-binding proteins"/>
    <property type="match status" value="1"/>
</dbReference>
<dbReference type="SUPFAM" id="SSF47781">
    <property type="entry name" value="RuvA domain 2-like"/>
    <property type="match status" value="1"/>
</dbReference>
<dbReference type="PROSITE" id="PS50172">
    <property type="entry name" value="BRCT"/>
    <property type="match status" value="1"/>
</dbReference>
<dbReference type="PROSITE" id="PS01055">
    <property type="entry name" value="DNA_LIGASE_N1"/>
    <property type="match status" value="1"/>
</dbReference>
<dbReference type="PROSITE" id="PS01056">
    <property type="entry name" value="DNA_LIGASE_N2"/>
    <property type="match status" value="1"/>
</dbReference>
<proteinExistence type="inferred from homology"/>
<reference key="1">
    <citation type="submission" date="2008-05" db="EMBL/GenBank/DDBJ databases">
        <title>Complete sequence of Rhodopseudomonas palustris TIE-1.</title>
        <authorList>
            <consortium name="US DOE Joint Genome Institute"/>
            <person name="Lucas S."/>
            <person name="Copeland A."/>
            <person name="Lapidus A."/>
            <person name="Glavina del Rio T."/>
            <person name="Dalin E."/>
            <person name="Tice H."/>
            <person name="Pitluck S."/>
            <person name="Chain P."/>
            <person name="Malfatti S."/>
            <person name="Shin M."/>
            <person name="Vergez L."/>
            <person name="Lang D."/>
            <person name="Schmutz J."/>
            <person name="Larimer F."/>
            <person name="Land M."/>
            <person name="Hauser L."/>
            <person name="Kyrpides N."/>
            <person name="Mikhailova N."/>
            <person name="Emerson D."/>
            <person name="Newman D.K."/>
            <person name="Roden E."/>
            <person name="Richardson P."/>
        </authorList>
    </citation>
    <scope>NUCLEOTIDE SEQUENCE [LARGE SCALE GENOMIC DNA]</scope>
    <source>
        <strain>TIE-1</strain>
    </source>
</reference>
<sequence>MTAKTKPAPDIATLTKPKAKVELMRLRLEIEGHDKAYYQDDAPKISDADYDALRRRLEAIEQKFPELVNASSPTQTVGAAPARGFAKVQHAVPMLSLGNAFADDEVAEFVERVQRFLRLDDVPAIVAEPKIDGLSLSLRYENGELVRAATRGDGFTGEDVTANVRTIKDVPNTLKGKHIPAACELRGEVYMLKQDFLALNKRQEEAGETVFANPRNSAAGSLRQKDVLVTASRPLKFFAYAWGEMSTYPMDEPTQHKMLQWLDHAGFVVNPEITLCHSVEDALAFYRRIGEKRASLPYDIDGVVYKVDRLDYQERLGFVSRSPRWAIAHKFAAEQATTVLEKIDIQVGRTGALTPVARLQPVTVGGVVVQNATLHNEDYIRGIGNDGEPIRDGVDIREGDTVVVQRAGDVIPQIVSVVMQKRPAGAEPYHFPHKCPVCGSHAVREEGEAVWRCTGALICPAQAVERLKHFVSRLAFDIDGLGEKQIELFHERGWVQEPADIFTLKARNDQLKLEQLEGYGETSVRNLFAAIDARRTIELHRLIFALGIRHVGEGNAKLLARHYGTLDAFLSAMRAAADAQTEEGNTSEAYQDLDNIAGIGDVVAEAVVEFFAEERNIKALDALLAELTEVLPAEQARRDTAVAGKTVVFTGSLSKFTRDEAKAAAERLGAKVAGSVSKKTDYVVAGEDAGSKLTKAKDLGVTVLTEDEWLALIGN</sequence>